<evidence type="ECO:0000255" key="1">
    <source>
        <dbReference type="HAMAP-Rule" id="MF_00011"/>
    </source>
</evidence>
<name>PURA_BURMA</name>
<feature type="chain" id="PRO_0000224261" description="Adenylosuccinate synthetase">
    <location>
        <begin position="1"/>
        <end position="448"/>
    </location>
</feature>
<feature type="active site" description="Proton acceptor" evidence="1">
    <location>
        <position position="23"/>
    </location>
</feature>
<feature type="active site" description="Proton donor" evidence="1">
    <location>
        <position position="51"/>
    </location>
</feature>
<feature type="binding site" evidence="1">
    <location>
        <begin position="22"/>
        <end position="28"/>
    </location>
    <ligand>
        <name>GTP</name>
        <dbReference type="ChEBI" id="CHEBI:37565"/>
    </ligand>
</feature>
<feature type="binding site" description="in other chain" evidence="1">
    <location>
        <begin position="23"/>
        <end position="26"/>
    </location>
    <ligand>
        <name>IMP</name>
        <dbReference type="ChEBI" id="CHEBI:58053"/>
        <note>ligand shared between dimeric partners</note>
    </ligand>
</feature>
<feature type="binding site" evidence="1">
    <location>
        <position position="23"/>
    </location>
    <ligand>
        <name>Mg(2+)</name>
        <dbReference type="ChEBI" id="CHEBI:18420"/>
    </ligand>
</feature>
<feature type="binding site" description="in other chain" evidence="1">
    <location>
        <begin position="48"/>
        <end position="51"/>
    </location>
    <ligand>
        <name>IMP</name>
        <dbReference type="ChEBI" id="CHEBI:58053"/>
        <note>ligand shared between dimeric partners</note>
    </ligand>
</feature>
<feature type="binding site" evidence="1">
    <location>
        <begin position="50"/>
        <end position="52"/>
    </location>
    <ligand>
        <name>GTP</name>
        <dbReference type="ChEBI" id="CHEBI:37565"/>
    </ligand>
</feature>
<feature type="binding site" evidence="1">
    <location>
        <position position="50"/>
    </location>
    <ligand>
        <name>Mg(2+)</name>
        <dbReference type="ChEBI" id="CHEBI:18420"/>
    </ligand>
</feature>
<feature type="binding site" description="in other chain" evidence="1">
    <location>
        <position position="139"/>
    </location>
    <ligand>
        <name>IMP</name>
        <dbReference type="ChEBI" id="CHEBI:58053"/>
        <note>ligand shared between dimeric partners</note>
    </ligand>
</feature>
<feature type="binding site" evidence="1">
    <location>
        <position position="153"/>
    </location>
    <ligand>
        <name>IMP</name>
        <dbReference type="ChEBI" id="CHEBI:58053"/>
        <note>ligand shared between dimeric partners</note>
    </ligand>
</feature>
<feature type="binding site" description="in other chain" evidence="1">
    <location>
        <position position="234"/>
    </location>
    <ligand>
        <name>IMP</name>
        <dbReference type="ChEBI" id="CHEBI:58053"/>
        <note>ligand shared between dimeric partners</note>
    </ligand>
</feature>
<feature type="binding site" description="in other chain" evidence="1">
    <location>
        <position position="249"/>
    </location>
    <ligand>
        <name>IMP</name>
        <dbReference type="ChEBI" id="CHEBI:58053"/>
        <note>ligand shared between dimeric partners</note>
    </ligand>
</feature>
<feature type="binding site" evidence="1">
    <location>
        <begin position="317"/>
        <end position="323"/>
    </location>
    <ligand>
        <name>substrate</name>
    </ligand>
</feature>
<feature type="binding site" description="in other chain" evidence="1">
    <location>
        <position position="321"/>
    </location>
    <ligand>
        <name>IMP</name>
        <dbReference type="ChEBI" id="CHEBI:58053"/>
        <note>ligand shared between dimeric partners</note>
    </ligand>
</feature>
<feature type="binding site" evidence="1">
    <location>
        <position position="323"/>
    </location>
    <ligand>
        <name>GTP</name>
        <dbReference type="ChEBI" id="CHEBI:37565"/>
    </ligand>
</feature>
<feature type="binding site" evidence="1">
    <location>
        <begin position="349"/>
        <end position="351"/>
    </location>
    <ligand>
        <name>GTP</name>
        <dbReference type="ChEBI" id="CHEBI:37565"/>
    </ligand>
</feature>
<feature type="binding site" evidence="1">
    <location>
        <begin position="431"/>
        <end position="433"/>
    </location>
    <ligand>
        <name>GTP</name>
        <dbReference type="ChEBI" id="CHEBI:37565"/>
    </ligand>
</feature>
<keyword id="KW-0963">Cytoplasm</keyword>
<keyword id="KW-0342">GTP-binding</keyword>
<keyword id="KW-0436">Ligase</keyword>
<keyword id="KW-0460">Magnesium</keyword>
<keyword id="KW-0479">Metal-binding</keyword>
<keyword id="KW-0547">Nucleotide-binding</keyword>
<keyword id="KW-0658">Purine biosynthesis</keyword>
<keyword id="KW-1185">Reference proteome</keyword>
<proteinExistence type="inferred from homology"/>
<accession>Q62JX6</accession>
<comment type="function">
    <text evidence="1">Plays an important role in the de novo pathway of purine nucleotide biosynthesis. Catalyzes the first committed step in the biosynthesis of AMP from IMP.</text>
</comment>
<comment type="catalytic activity">
    <reaction evidence="1">
        <text>IMP + L-aspartate + GTP = N(6)-(1,2-dicarboxyethyl)-AMP + GDP + phosphate + 2 H(+)</text>
        <dbReference type="Rhea" id="RHEA:15753"/>
        <dbReference type="ChEBI" id="CHEBI:15378"/>
        <dbReference type="ChEBI" id="CHEBI:29991"/>
        <dbReference type="ChEBI" id="CHEBI:37565"/>
        <dbReference type="ChEBI" id="CHEBI:43474"/>
        <dbReference type="ChEBI" id="CHEBI:57567"/>
        <dbReference type="ChEBI" id="CHEBI:58053"/>
        <dbReference type="ChEBI" id="CHEBI:58189"/>
        <dbReference type="EC" id="6.3.4.4"/>
    </reaction>
</comment>
<comment type="cofactor">
    <cofactor evidence="1">
        <name>Mg(2+)</name>
        <dbReference type="ChEBI" id="CHEBI:18420"/>
    </cofactor>
    <text evidence="1">Binds 1 Mg(2+) ion per subunit.</text>
</comment>
<comment type="pathway">
    <text evidence="1">Purine metabolism; AMP biosynthesis via de novo pathway; AMP from IMP: step 1/2.</text>
</comment>
<comment type="subunit">
    <text evidence="1">Homodimer.</text>
</comment>
<comment type="subcellular location">
    <subcellularLocation>
        <location evidence="1">Cytoplasm</location>
    </subcellularLocation>
</comment>
<comment type="similarity">
    <text evidence="1">Belongs to the adenylosuccinate synthetase family.</text>
</comment>
<organism>
    <name type="scientific">Burkholderia mallei (strain ATCC 23344)</name>
    <dbReference type="NCBI Taxonomy" id="243160"/>
    <lineage>
        <taxon>Bacteria</taxon>
        <taxon>Pseudomonadati</taxon>
        <taxon>Pseudomonadota</taxon>
        <taxon>Betaproteobacteria</taxon>
        <taxon>Burkholderiales</taxon>
        <taxon>Burkholderiaceae</taxon>
        <taxon>Burkholderia</taxon>
        <taxon>pseudomallei group</taxon>
    </lineage>
</organism>
<gene>
    <name evidence="1" type="primary">purA</name>
    <name type="ordered locus">BMA1333</name>
</gene>
<sequence>MSASAVNVTPGRNVVVVGTQWGDEGKGKIVDWLTDHAQGVVRFQGGHNAGHTLIIGGKKTILRLIPSGIMREGVACYIGNGVVLSPEALFKEIGELEEAGLSVRERLFISEATTLILPYHIAIDQAREARRGAGKIGTTGRGIGPAYEDKVGRRALRVQDLFDARTFADRLRENLDFHNFVLTQYLGGAAVDFQATLDTMLGYADRLKPMVTDVSRRLYEENHAGRNLLFEGAQGTLLDIDHGTYPFVTSSNCVAGAAAAGAGVGPQKLDYILGITKAYCTRVGSGPFPSELYDADNPSRQDQIGITLANVGKEFGSVTGRPRRTGWLDAAALRRSIQINGVSGLCMTKLDVLDGLDEVKLCVGYKIDGEDVDLLPRGAAEVARCEPVYETFGGWKESTVGIDSWDALPANARAYLTRVQEVAGVPIDMVSTGPDRDETILLRHPFKV</sequence>
<protein>
    <recommendedName>
        <fullName evidence="1">Adenylosuccinate synthetase</fullName>
        <shortName evidence="1">AMPSase</shortName>
        <shortName evidence="1">AdSS</shortName>
        <ecNumber evidence="1">6.3.4.4</ecNumber>
    </recommendedName>
    <alternativeName>
        <fullName evidence="1">IMP--aspartate ligase</fullName>
    </alternativeName>
</protein>
<reference key="1">
    <citation type="journal article" date="2004" name="Proc. Natl. Acad. Sci. U.S.A.">
        <title>Structural flexibility in the Burkholderia mallei genome.</title>
        <authorList>
            <person name="Nierman W.C."/>
            <person name="DeShazer D."/>
            <person name="Kim H.S."/>
            <person name="Tettelin H."/>
            <person name="Nelson K.E."/>
            <person name="Feldblyum T.V."/>
            <person name="Ulrich R.L."/>
            <person name="Ronning C.M."/>
            <person name="Brinkac L.M."/>
            <person name="Daugherty S.C."/>
            <person name="Davidsen T.D."/>
            <person name="DeBoy R.T."/>
            <person name="Dimitrov G."/>
            <person name="Dodson R.J."/>
            <person name="Durkin A.S."/>
            <person name="Gwinn M.L."/>
            <person name="Haft D.H."/>
            <person name="Khouri H.M."/>
            <person name="Kolonay J.F."/>
            <person name="Madupu R."/>
            <person name="Mohammoud Y."/>
            <person name="Nelson W.C."/>
            <person name="Radune D."/>
            <person name="Romero C.M."/>
            <person name="Sarria S."/>
            <person name="Selengut J."/>
            <person name="Shamblin C."/>
            <person name="Sullivan S.A."/>
            <person name="White O."/>
            <person name="Yu Y."/>
            <person name="Zafar N."/>
            <person name="Zhou L."/>
            <person name="Fraser C.M."/>
        </authorList>
    </citation>
    <scope>NUCLEOTIDE SEQUENCE [LARGE SCALE GENOMIC DNA]</scope>
    <source>
        <strain>ATCC 23344</strain>
    </source>
</reference>
<dbReference type="EC" id="6.3.4.4" evidence="1"/>
<dbReference type="EMBL" id="CP000010">
    <property type="protein sequence ID" value="AAU47541.1"/>
    <property type="molecule type" value="Genomic_DNA"/>
</dbReference>
<dbReference type="RefSeq" id="WP_004193462.1">
    <property type="nucleotide sequence ID" value="NC_006348.1"/>
</dbReference>
<dbReference type="RefSeq" id="YP_102993.1">
    <property type="nucleotide sequence ID" value="NC_006348.1"/>
</dbReference>
<dbReference type="SMR" id="Q62JX6"/>
<dbReference type="KEGG" id="bma:BMA1333"/>
<dbReference type="PATRIC" id="fig|243160.12.peg.1372"/>
<dbReference type="eggNOG" id="COG0104">
    <property type="taxonomic scope" value="Bacteria"/>
</dbReference>
<dbReference type="HOGENOM" id="CLU_029848_0_0_4"/>
<dbReference type="UniPathway" id="UPA00075">
    <property type="reaction ID" value="UER00335"/>
</dbReference>
<dbReference type="Proteomes" id="UP000006693">
    <property type="component" value="Chromosome 1"/>
</dbReference>
<dbReference type="GO" id="GO:0005737">
    <property type="term" value="C:cytoplasm"/>
    <property type="evidence" value="ECO:0007669"/>
    <property type="project" value="UniProtKB-SubCell"/>
</dbReference>
<dbReference type="GO" id="GO:0004019">
    <property type="term" value="F:adenylosuccinate synthase activity"/>
    <property type="evidence" value="ECO:0007669"/>
    <property type="project" value="UniProtKB-UniRule"/>
</dbReference>
<dbReference type="GO" id="GO:0005525">
    <property type="term" value="F:GTP binding"/>
    <property type="evidence" value="ECO:0007669"/>
    <property type="project" value="UniProtKB-UniRule"/>
</dbReference>
<dbReference type="GO" id="GO:0000287">
    <property type="term" value="F:magnesium ion binding"/>
    <property type="evidence" value="ECO:0007669"/>
    <property type="project" value="UniProtKB-UniRule"/>
</dbReference>
<dbReference type="GO" id="GO:0044208">
    <property type="term" value="P:'de novo' AMP biosynthetic process"/>
    <property type="evidence" value="ECO:0007669"/>
    <property type="project" value="UniProtKB-UniRule"/>
</dbReference>
<dbReference type="GO" id="GO:0046040">
    <property type="term" value="P:IMP metabolic process"/>
    <property type="evidence" value="ECO:0007669"/>
    <property type="project" value="TreeGrafter"/>
</dbReference>
<dbReference type="CDD" id="cd03108">
    <property type="entry name" value="AdSS"/>
    <property type="match status" value="1"/>
</dbReference>
<dbReference type="FunFam" id="1.10.300.10:FF:000001">
    <property type="entry name" value="Adenylosuccinate synthetase"/>
    <property type="match status" value="1"/>
</dbReference>
<dbReference type="FunFam" id="3.90.170.10:FF:000001">
    <property type="entry name" value="Adenylosuccinate synthetase"/>
    <property type="match status" value="1"/>
</dbReference>
<dbReference type="Gene3D" id="3.40.440.10">
    <property type="entry name" value="Adenylosuccinate Synthetase, subunit A, domain 1"/>
    <property type="match status" value="1"/>
</dbReference>
<dbReference type="Gene3D" id="1.10.300.10">
    <property type="entry name" value="Adenylosuccinate Synthetase, subunit A, domain 2"/>
    <property type="match status" value="1"/>
</dbReference>
<dbReference type="Gene3D" id="3.90.170.10">
    <property type="entry name" value="Adenylosuccinate Synthetase, subunit A, domain 3"/>
    <property type="match status" value="1"/>
</dbReference>
<dbReference type="HAMAP" id="MF_00011">
    <property type="entry name" value="Adenylosucc_synth"/>
    <property type="match status" value="1"/>
</dbReference>
<dbReference type="InterPro" id="IPR018220">
    <property type="entry name" value="Adenylosuccin_syn_GTP-bd"/>
</dbReference>
<dbReference type="InterPro" id="IPR033128">
    <property type="entry name" value="Adenylosuccin_syn_Lys_AS"/>
</dbReference>
<dbReference type="InterPro" id="IPR042109">
    <property type="entry name" value="Adenylosuccinate_synth_dom1"/>
</dbReference>
<dbReference type="InterPro" id="IPR042110">
    <property type="entry name" value="Adenylosuccinate_synth_dom2"/>
</dbReference>
<dbReference type="InterPro" id="IPR042111">
    <property type="entry name" value="Adenylosuccinate_synth_dom3"/>
</dbReference>
<dbReference type="InterPro" id="IPR001114">
    <property type="entry name" value="Adenylosuccinate_synthetase"/>
</dbReference>
<dbReference type="InterPro" id="IPR027417">
    <property type="entry name" value="P-loop_NTPase"/>
</dbReference>
<dbReference type="NCBIfam" id="NF002223">
    <property type="entry name" value="PRK01117.1"/>
    <property type="match status" value="1"/>
</dbReference>
<dbReference type="NCBIfam" id="TIGR00184">
    <property type="entry name" value="purA"/>
    <property type="match status" value="1"/>
</dbReference>
<dbReference type="PANTHER" id="PTHR11846">
    <property type="entry name" value="ADENYLOSUCCINATE SYNTHETASE"/>
    <property type="match status" value="1"/>
</dbReference>
<dbReference type="PANTHER" id="PTHR11846:SF0">
    <property type="entry name" value="ADENYLOSUCCINATE SYNTHETASE"/>
    <property type="match status" value="1"/>
</dbReference>
<dbReference type="Pfam" id="PF00709">
    <property type="entry name" value="Adenylsucc_synt"/>
    <property type="match status" value="1"/>
</dbReference>
<dbReference type="SMART" id="SM00788">
    <property type="entry name" value="Adenylsucc_synt"/>
    <property type="match status" value="1"/>
</dbReference>
<dbReference type="SUPFAM" id="SSF52540">
    <property type="entry name" value="P-loop containing nucleoside triphosphate hydrolases"/>
    <property type="match status" value="1"/>
</dbReference>
<dbReference type="PROSITE" id="PS01266">
    <property type="entry name" value="ADENYLOSUCCIN_SYN_1"/>
    <property type="match status" value="1"/>
</dbReference>
<dbReference type="PROSITE" id="PS00513">
    <property type="entry name" value="ADENYLOSUCCIN_SYN_2"/>
    <property type="match status" value="1"/>
</dbReference>